<gene>
    <name evidence="1" type="primary">metK</name>
    <name type="ordered locus">HNE_0786</name>
</gene>
<proteinExistence type="inferred from homology"/>
<reference key="1">
    <citation type="journal article" date="2006" name="J. Bacteriol.">
        <title>Comparative genomic evidence for a close relationship between the dimorphic prosthecate bacteria Hyphomonas neptunium and Caulobacter crescentus.</title>
        <authorList>
            <person name="Badger J.H."/>
            <person name="Hoover T.R."/>
            <person name="Brun Y.V."/>
            <person name="Weiner R.M."/>
            <person name="Laub M.T."/>
            <person name="Alexandre G."/>
            <person name="Mrazek J."/>
            <person name="Ren Q."/>
            <person name="Paulsen I.T."/>
            <person name="Nelson K.E."/>
            <person name="Khouri H.M."/>
            <person name="Radune D."/>
            <person name="Sosa J."/>
            <person name="Dodson R.J."/>
            <person name="Sullivan S.A."/>
            <person name="Rosovitz M.J."/>
            <person name="Madupu R."/>
            <person name="Brinkac L.M."/>
            <person name="Durkin A.S."/>
            <person name="Daugherty S.C."/>
            <person name="Kothari S.P."/>
            <person name="Giglio M.G."/>
            <person name="Zhou L."/>
            <person name="Haft D.H."/>
            <person name="Selengut J.D."/>
            <person name="Davidsen T.M."/>
            <person name="Yang Q."/>
            <person name="Zafar N."/>
            <person name="Ward N.L."/>
        </authorList>
    </citation>
    <scope>NUCLEOTIDE SEQUENCE [LARGE SCALE GENOMIC DNA]</scope>
    <source>
        <strain>ATCC 15444</strain>
    </source>
</reference>
<feature type="chain" id="PRO_0000302925" description="S-adenosylmethionine synthase">
    <location>
        <begin position="1"/>
        <end position="393"/>
    </location>
</feature>
<feature type="region of interest" description="Flexible loop" evidence="1">
    <location>
        <begin position="104"/>
        <end position="114"/>
    </location>
</feature>
<feature type="binding site" description="in other chain" evidence="1">
    <location>
        <position position="17"/>
    </location>
    <ligand>
        <name>ATP</name>
        <dbReference type="ChEBI" id="CHEBI:30616"/>
        <note>ligand shared between two neighboring subunits</note>
    </ligand>
</feature>
<feature type="binding site" evidence="1">
    <location>
        <position position="19"/>
    </location>
    <ligand>
        <name>Mg(2+)</name>
        <dbReference type="ChEBI" id="CHEBI:18420"/>
    </ligand>
</feature>
<feature type="binding site" evidence="1">
    <location>
        <position position="45"/>
    </location>
    <ligand>
        <name>K(+)</name>
        <dbReference type="ChEBI" id="CHEBI:29103"/>
    </ligand>
</feature>
<feature type="binding site" description="in other chain" evidence="1">
    <location>
        <position position="58"/>
    </location>
    <ligand>
        <name>L-methionine</name>
        <dbReference type="ChEBI" id="CHEBI:57844"/>
        <note>ligand shared between two neighboring subunits</note>
    </ligand>
</feature>
<feature type="binding site" description="in other chain" evidence="1">
    <location>
        <position position="104"/>
    </location>
    <ligand>
        <name>L-methionine</name>
        <dbReference type="ChEBI" id="CHEBI:57844"/>
        <note>ligand shared between two neighboring subunits</note>
    </ligand>
</feature>
<feature type="binding site" description="in other chain" evidence="1">
    <location>
        <begin position="171"/>
        <end position="173"/>
    </location>
    <ligand>
        <name>ATP</name>
        <dbReference type="ChEBI" id="CHEBI:30616"/>
        <note>ligand shared between two neighboring subunits</note>
    </ligand>
</feature>
<feature type="binding site" evidence="1">
    <location>
        <position position="245"/>
    </location>
    <ligand>
        <name>ATP</name>
        <dbReference type="ChEBI" id="CHEBI:30616"/>
        <note>ligand shared between two neighboring subunits</note>
    </ligand>
</feature>
<feature type="binding site" evidence="1">
    <location>
        <position position="245"/>
    </location>
    <ligand>
        <name>L-methionine</name>
        <dbReference type="ChEBI" id="CHEBI:57844"/>
        <note>ligand shared between two neighboring subunits</note>
    </ligand>
</feature>
<feature type="binding site" description="in other chain" evidence="1">
    <location>
        <begin position="251"/>
        <end position="252"/>
    </location>
    <ligand>
        <name>ATP</name>
        <dbReference type="ChEBI" id="CHEBI:30616"/>
        <note>ligand shared between two neighboring subunits</note>
    </ligand>
</feature>
<feature type="binding site" evidence="1">
    <location>
        <position position="268"/>
    </location>
    <ligand>
        <name>ATP</name>
        <dbReference type="ChEBI" id="CHEBI:30616"/>
        <note>ligand shared between two neighboring subunits</note>
    </ligand>
</feature>
<feature type="binding site" evidence="1">
    <location>
        <position position="272"/>
    </location>
    <ligand>
        <name>ATP</name>
        <dbReference type="ChEBI" id="CHEBI:30616"/>
        <note>ligand shared between two neighboring subunits</note>
    </ligand>
</feature>
<feature type="binding site" description="in other chain" evidence="1">
    <location>
        <position position="276"/>
    </location>
    <ligand>
        <name>L-methionine</name>
        <dbReference type="ChEBI" id="CHEBI:57844"/>
        <note>ligand shared between two neighboring subunits</note>
    </ligand>
</feature>
<keyword id="KW-0067">ATP-binding</keyword>
<keyword id="KW-0963">Cytoplasm</keyword>
<keyword id="KW-0460">Magnesium</keyword>
<keyword id="KW-0479">Metal-binding</keyword>
<keyword id="KW-0547">Nucleotide-binding</keyword>
<keyword id="KW-0554">One-carbon metabolism</keyword>
<keyword id="KW-0630">Potassium</keyword>
<keyword id="KW-1185">Reference proteome</keyword>
<keyword id="KW-0808">Transferase</keyword>
<evidence type="ECO:0000255" key="1">
    <source>
        <dbReference type="HAMAP-Rule" id="MF_00086"/>
    </source>
</evidence>
<comment type="function">
    <text evidence="1">Catalyzes the formation of S-adenosylmethionine (AdoMet) from methionine and ATP. The overall synthetic reaction is composed of two sequential steps, AdoMet formation and the subsequent tripolyphosphate hydrolysis which occurs prior to release of AdoMet from the enzyme.</text>
</comment>
<comment type="catalytic activity">
    <reaction evidence="1">
        <text>L-methionine + ATP + H2O = S-adenosyl-L-methionine + phosphate + diphosphate</text>
        <dbReference type="Rhea" id="RHEA:21080"/>
        <dbReference type="ChEBI" id="CHEBI:15377"/>
        <dbReference type="ChEBI" id="CHEBI:30616"/>
        <dbReference type="ChEBI" id="CHEBI:33019"/>
        <dbReference type="ChEBI" id="CHEBI:43474"/>
        <dbReference type="ChEBI" id="CHEBI:57844"/>
        <dbReference type="ChEBI" id="CHEBI:59789"/>
        <dbReference type="EC" id="2.5.1.6"/>
    </reaction>
</comment>
<comment type="cofactor">
    <cofactor evidence="1">
        <name>Mg(2+)</name>
        <dbReference type="ChEBI" id="CHEBI:18420"/>
    </cofactor>
    <text evidence="1">Binds 2 divalent ions per subunit.</text>
</comment>
<comment type="cofactor">
    <cofactor evidence="1">
        <name>K(+)</name>
        <dbReference type="ChEBI" id="CHEBI:29103"/>
    </cofactor>
    <text evidence="1">Binds 1 potassium ion per subunit.</text>
</comment>
<comment type="pathway">
    <text evidence="1">Amino-acid biosynthesis; S-adenosyl-L-methionine biosynthesis; S-adenosyl-L-methionine from L-methionine: step 1/1.</text>
</comment>
<comment type="subunit">
    <text evidence="1">Homotetramer; dimer of dimers.</text>
</comment>
<comment type="subcellular location">
    <subcellularLocation>
        <location evidence="1">Cytoplasm</location>
    </subcellularLocation>
</comment>
<comment type="similarity">
    <text evidence="1">Belongs to the AdoMet synthase family.</text>
</comment>
<organism>
    <name type="scientific">Hyphomonas neptunium (strain ATCC 15444)</name>
    <dbReference type="NCBI Taxonomy" id="228405"/>
    <lineage>
        <taxon>Bacteria</taxon>
        <taxon>Pseudomonadati</taxon>
        <taxon>Pseudomonadota</taxon>
        <taxon>Alphaproteobacteria</taxon>
        <taxon>Hyphomonadales</taxon>
        <taxon>Hyphomonadaceae</taxon>
        <taxon>Hyphomonas</taxon>
    </lineage>
</organism>
<accession>Q0C429</accession>
<protein>
    <recommendedName>
        <fullName evidence="1">S-adenosylmethionine synthase</fullName>
        <shortName evidence="1">AdoMet synthase</shortName>
        <ecNumber evidence="1">2.5.1.6</ecNumber>
    </recommendedName>
    <alternativeName>
        <fullName evidence="1">MAT</fullName>
    </alternativeName>
    <alternativeName>
        <fullName evidence="1">Methionine adenosyltransferase</fullName>
    </alternativeName>
</protein>
<sequence>MPLKSHEFTSESVAEGHPDKVADQISDAIVDLFLSKDPTSKVAVETLCTTNRVVLAGEVRTNNGSVVTPDEMNAAARAVVKKIGYEQDGFHWEKMAVENHVHGQSAEIAQGVEEGQGLFKEEGAGDQGIMFGYATDETPELMPATLVYSHQILQKLAELRHSGKNPQLEPDAKSQVTLQYEGSRPVGVNAVVVSHQHKAGVSQEELREVIRPVVKAVLPEGWFPPEEKFYVNPTGSFVIGGPDGDCGLTGRKIIVDTYGGAAPHGGGAFSGKDPSKVDRSAAYATRYLAKNIVAAGLATRCTIQVSYAIGVAQPLSIYVDTHGTGQADEARIAKAVRELFDLSPKGIRTHLKLSNPIYGPTAAYGHFGRIPGEGGTFTWEKTDLAGELKRLVN</sequence>
<name>METK_HYPNA</name>
<dbReference type="EC" id="2.5.1.6" evidence="1"/>
<dbReference type="EMBL" id="CP000158">
    <property type="protein sequence ID" value="ABI76710.1"/>
    <property type="molecule type" value="Genomic_DNA"/>
</dbReference>
<dbReference type="RefSeq" id="WP_011645814.1">
    <property type="nucleotide sequence ID" value="NC_008358.1"/>
</dbReference>
<dbReference type="SMR" id="Q0C429"/>
<dbReference type="STRING" id="228405.HNE_0786"/>
<dbReference type="KEGG" id="hne:HNE_0786"/>
<dbReference type="eggNOG" id="COG0192">
    <property type="taxonomic scope" value="Bacteria"/>
</dbReference>
<dbReference type="HOGENOM" id="CLU_041802_1_1_5"/>
<dbReference type="UniPathway" id="UPA00315">
    <property type="reaction ID" value="UER00080"/>
</dbReference>
<dbReference type="Proteomes" id="UP000001959">
    <property type="component" value="Chromosome"/>
</dbReference>
<dbReference type="GO" id="GO:0005737">
    <property type="term" value="C:cytoplasm"/>
    <property type="evidence" value="ECO:0007669"/>
    <property type="project" value="UniProtKB-SubCell"/>
</dbReference>
<dbReference type="GO" id="GO:0005524">
    <property type="term" value="F:ATP binding"/>
    <property type="evidence" value="ECO:0007669"/>
    <property type="project" value="UniProtKB-UniRule"/>
</dbReference>
<dbReference type="GO" id="GO:0000287">
    <property type="term" value="F:magnesium ion binding"/>
    <property type="evidence" value="ECO:0007669"/>
    <property type="project" value="UniProtKB-UniRule"/>
</dbReference>
<dbReference type="GO" id="GO:0004478">
    <property type="term" value="F:methionine adenosyltransferase activity"/>
    <property type="evidence" value="ECO:0007669"/>
    <property type="project" value="UniProtKB-UniRule"/>
</dbReference>
<dbReference type="GO" id="GO:0006730">
    <property type="term" value="P:one-carbon metabolic process"/>
    <property type="evidence" value="ECO:0007669"/>
    <property type="project" value="UniProtKB-KW"/>
</dbReference>
<dbReference type="GO" id="GO:0006556">
    <property type="term" value="P:S-adenosylmethionine biosynthetic process"/>
    <property type="evidence" value="ECO:0007669"/>
    <property type="project" value="UniProtKB-UniRule"/>
</dbReference>
<dbReference type="CDD" id="cd18079">
    <property type="entry name" value="S-AdoMet_synt"/>
    <property type="match status" value="1"/>
</dbReference>
<dbReference type="FunFam" id="3.30.300.10:FF:000003">
    <property type="entry name" value="S-adenosylmethionine synthase"/>
    <property type="match status" value="1"/>
</dbReference>
<dbReference type="Gene3D" id="3.30.300.10">
    <property type="match status" value="3"/>
</dbReference>
<dbReference type="HAMAP" id="MF_00086">
    <property type="entry name" value="S_AdoMet_synth1"/>
    <property type="match status" value="1"/>
</dbReference>
<dbReference type="InterPro" id="IPR022631">
    <property type="entry name" value="ADOMET_SYNTHASE_CS"/>
</dbReference>
<dbReference type="InterPro" id="IPR022630">
    <property type="entry name" value="S-AdoMet_synt_C"/>
</dbReference>
<dbReference type="InterPro" id="IPR022629">
    <property type="entry name" value="S-AdoMet_synt_central"/>
</dbReference>
<dbReference type="InterPro" id="IPR022628">
    <property type="entry name" value="S-AdoMet_synt_N"/>
</dbReference>
<dbReference type="InterPro" id="IPR002133">
    <property type="entry name" value="S-AdoMet_synthetase"/>
</dbReference>
<dbReference type="InterPro" id="IPR022636">
    <property type="entry name" value="S-AdoMet_synthetase_sfam"/>
</dbReference>
<dbReference type="NCBIfam" id="TIGR01034">
    <property type="entry name" value="metK"/>
    <property type="match status" value="1"/>
</dbReference>
<dbReference type="PANTHER" id="PTHR11964">
    <property type="entry name" value="S-ADENOSYLMETHIONINE SYNTHETASE"/>
    <property type="match status" value="1"/>
</dbReference>
<dbReference type="Pfam" id="PF02773">
    <property type="entry name" value="S-AdoMet_synt_C"/>
    <property type="match status" value="1"/>
</dbReference>
<dbReference type="Pfam" id="PF02772">
    <property type="entry name" value="S-AdoMet_synt_M"/>
    <property type="match status" value="1"/>
</dbReference>
<dbReference type="Pfam" id="PF00438">
    <property type="entry name" value="S-AdoMet_synt_N"/>
    <property type="match status" value="1"/>
</dbReference>
<dbReference type="PIRSF" id="PIRSF000497">
    <property type="entry name" value="MAT"/>
    <property type="match status" value="1"/>
</dbReference>
<dbReference type="SUPFAM" id="SSF55973">
    <property type="entry name" value="S-adenosylmethionine synthetase"/>
    <property type="match status" value="3"/>
</dbReference>
<dbReference type="PROSITE" id="PS00376">
    <property type="entry name" value="ADOMET_SYNTHASE_1"/>
    <property type="match status" value="1"/>
</dbReference>
<dbReference type="PROSITE" id="PS00377">
    <property type="entry name" value="ADOMET_SYNTHASE_2"/>
    <property type="match status" value="1"/>
</dbReference>